<organism>
    <name type="scientific">Pseudomonas fluorescens (strain Pf0-1)</name>
    <dbReference type="NCBI Taxonomy" id="205922"/>
    <lineage>
        <taxon>Bacteria</taxon>
        <taxon>Pseudomonadati</taxon>
        <taxon>Pseudomonadota</taxon>
        <taxon>Gammaproteobacteria</taxon>
        <taxon>Pseudomonadales</taxon>
        <taxon>Pseudomonadaceae</taxon>
        <taxon>Pseudomonas</taxon>
    </lineage>
</organism>
<keyword id="KW-0067">ATP-binding</keyword>
<keyword id="KW-0119">Carbohydrate metabolism</keyword>
<keyword id="KW-0418">Kinase</keyword>
<keyword id="KW-0511">Multifunctional enzyme</keyword>
<keyword id="KW-0547">Nucleotide-binding</keyword>
<keyword id="KW-0548">Nucleotidyltransferase</keyword>
<keyword id="KW-0808">Transferase</keyword>
<name>HLDE_PSEPF</name>
<reference key="1">
    <citation type="journal article" date="2009" name="Genome Biol.">
        <title>Genomic and genetic analyses of diversity and plant interactions of Pseudomonas fluorescens.</title>
        <authorList>
            <person name="Silby M.W."/>
            <person name="Cerdeno-Tarraga A.M."/>
            <person name="Vernikos G.S."/>
            <person name="Giddens S.R."/>
            <person name="Jackson R.W."/>
            <person name="Preston G.M."/>
            <person name="Zhang X.-X."/>
            <person name="Moon C.D."/>
            <person name="Gehrig S.M."/>
            <person name="Godfrey S.A.C."/>
            <person name="Knight C.G."/>
            <person name="Malone J.G."/>
            <person name="Robinson Z."/>
            <person name="Spiers A.J."/>
            <person name="Harris S."/>
            <person name="Challis G.L."/>
            <person name="Yaxley A.M."/>
            <person name="Harris D."/>
            <person name="Seeger K."/>
            <person name="Murphy L."/>
            <person name="Rutter S."/>
            <person name="Squares R."/>
            <person name="Quail M.A."/>
            <person name="Saunders E."/>
            <person name="Mavromatis K."/>
            <person name="Brettin T.S."/>
            <person name="Bentley S.D."/>
            <person name="Hothersall J."/>
            <person name="Stephens E."/>
            <person name="Thomas C.M."/>
            <person name="Parkhill J."/>
            <person name="Levy S.B."/>
            <person name="Rainey P.B."/>
            <person name="Thomson N.R."/>
        </authorList>
    </citation>
    <scope>NUCLEOTIDE SEQUENCE [LARGE SCALE GENOMIC DNA]</scope>
    <source>
        <strain>Pf0-1</strain>
    </source>
</reference>
<proteinExistence type="inferred from homology"/>
<gene>
    <name evidence="1" type="primary">hldE</name>
    <name type="ordered locus">Pfl01_0484</name>
</gene>
<dbReference type="EC" id="2.7.1.167" evidence="1"/>
<dbReference type="EC" id="2.7.7.70" evidence="1"/>
<dbReference type="EMBL" id="CP000094">
    <property type="protein sequence ID" value="ABA72228.1"/>
    <property type="molecule type" value="Genomic_DNA"/>
</dbReference>
<dbReference type="RefSeq" id="WP_011332149.1">
    <property type="nucleotide sequence ID" value="NC_007492.2"/>
</dbReference>
<dbReference type="SMR" id="Q3KJ28"/>
<dbReference type="KEGG" id="pfo:Pfl01_0484"/>
<dbReference type="eggNOG" id="COG0615">
    <property type="taxonomic scope" value="Bacteria"/>
</dbReference>
<dbReference type="eggNOG" id="COG2870">
    <property type="taxonomic scope" value="Bacteria"/>
</dbReference>
<dbReference type="HOGENOM" id="CLU_021150_2_1_6"/>
<dbReference type="UniPathway" id="UPA00356">
    <property type="reaction ID" value="UER00437"/>
</dbReference>
<dbReference type="UniPathway" id="UPA00356">
    <property type="reaction ID" value="UER00439"/>
</dbReference>
<dbReference type="Proteomes" id="UP000002704">
    <property type="component" value="Chromosome"/>
</dbReference>
<dbReference type="GO" id="GO:0005829">
    <property type="term" value="C:cytosol"/>
    <property type="evidence" value="ECO:0007669"/>
    <property type="project" value="TreeGrafter"/>
</dbReference>
<dbReference type="GO" id="GO:0005524">
    <property type="term" value="F:ATP binding"/>
    <property type="evidence" value="ECO:0007669"/>
    <property type="project" value="UniProtKB-UniRule"/>
</dbReference>
<dbReference type="GO" id="GO:0033785">
    <property type="term" value="F:heptose 7-phosphate kinase activity"/>
    <property type="evidence" value="ECO:0007669"/>
    <property type="project" value="UniProtKB-UniRule"/>
</dbReference>
<dbReference type="GO" id="GO:0033786">
    <property type="term" value="F:heptose-1-phosphate adenylyltransferase activity"/>
    <property type="evidence" value="ECO:0007669"/>
    <property type="project" value="UniProtKB-UniRule"/>
</dbReference>
<dbReference type="GO" id="GO:0016773">
    <property type="term" value="F:phosphotransferase activity, alcohol group as acceptor"/>
    <property type="evidence" value="ECO:0007669"/>
    <property type="project" value="InterPro"/>
</dbReference>
<dbReference type="GO" id="GO:0097171">
    <property type="term" value="P:ADP-L-glycero-beta-D-manno-heptose biosynthetic process"/>
    <property type="evidence" value="ECO:0007669"/>
    <property type="project" value="UniProtKB-UniPathway"/>
</dbReference>
<dbReference type="CDD" id="cd01172">
    <property type="entry name" value="RfaE_like"/>
    <property type="match status" value="1"/>
</dbReference>
<dbReference type="FunFam" id="3.40.1190.20:FF:000002">
    <property type="entry name" value="Bifunctional protein HldE"/>
    <property type="match status" value="1"/>
</dbReference>
<dbReference type="FunFam" id="3.40.50.620:FF:000028">
    <property type="entry name" value="Bifunctional protein HldE"/>
    <property type="match status" value="1"/>
</dbReference>
<dbReference type="Gene3D" id="3.40.1190.20">
    <property type="match status" value="1"/>
</dbReference>
<dbReference type="Gene3D" id="3.40.50.620">
    <property type="entry name" value="HUPs"/>
    <property type="match status" value="1"/>
</dbReference>
<dbReference type="HAMAP" id="MF_01603">
    <property type="entry name" value="HldE"/>
    <property type="match status" value="1"/>
</dbReference>
<dbReference type="InterPro" id="IPR023030">
    <property type="entry name" value="Bifunc_HldE"/>
</dbReference>
<dbReference type="InterPro" id="IPR002173">
    <property type="entry name" value="Carboh/pur_kinase_PfkB_CS"/>
</dbReference>
<dbReference type="InterPro" id="IPR004821">
    <property type="entry name" value="Cyt_trans-like"/>
</dbReference>
<dbReference type="InterPro" id="IPR011611">
    <property type="entry name" value="PfkB_dom"/>
</dbReference>
<dbReference type="InterPro" id="IPR011913">
    <property type="entry name" value="RfaE_dom_I"/>
</dbReference>
<dbReference type="InterPro" id="IPR011914">
    <property type="entry name" value="RfaE_dom_II"/>
</dbReference>
<dbReference type="InterPro" id="IPR029056">
    <property type="entry name" value="Ribokinase-like"/>
</dbReference>
<dbReference type="InterPro" id="IPR014729">
    <property type="entry name" value="Rossmann-like_a/b/a_fold"/>
</dbReference>
<dbReference type="NCBIfam" id="TIGR00125">
    <property type="entry name" value="cyt_tran_rel"/>
    <property type="match status" value="1"/>
</dbReference>
<dbReference type="NCBIfam" id="NF008454">
    <property type="entry name" value="PRK11316.1"/>
    <property type="match status" value="1"/>
</dbReference>
<dbReference type="NCBIfam" id="TIGR02198">
    <property type="entry name" value="rfaE_dom_I"/>
    <property type="match status" value="1"/>
</dbReference>
<dbReference type="NCBIfam" id="TIGR02199">
    <property type="entry name" value="rfaE_dom_II"/>
    <property type="match status" value="1"/>
</dbReference>
<dbReference type="PANTHER" id="PTHR46969">
    <property type="entry name" value="BIFUNCTIONAL PROTEIN HLDE"/>
    <property type="match status" value="1"/>
</dbReference>
<dbReference type="PANTHER" id="PTHR46969:SF1">
    <property type="entry name" value="BIFUNCTIONAL PROTEIN HLDE"/>
    <property type="match status" value="1"/>
</dbReference>
<dbReference type="Pfam" id="PF01467">
    <property type="entry name" value="CTP_transf_like"/>
    <property type="match status" value="1"/>
</dbReference>
<dbReference type="Pfam" id="PF00294">
    <property type="entry name" value="PfkB"/>
    <property type="match status" value="1"/>
</dbReference>
<dbReference type="SUPFAM" id="SSF52374">
    <property type="entry name" value="Nucleotidylyl transferase"/>
    <property type="match status" value="1"/>
</dbReference>
<dbReference type="SUPFAM" id="SSF53613">
    <property type="entry name" value="Ribokinase-like"/>
    <property type="match status" value="1"/>
</dbReference>
<dbReference type="PROSITE" id="PS00583">
    <property type="entry name" value="PFKB_KINASES_1"/>
    <property type="match status" value="1"/>
</dbReference>
<protein>
    <recommendedName>
        <fullName evidence="1">Bifunctional protein HldE</fullName>
    </recommendedName>
    <domain>
        <recommendedName>
            <fullName evidence="1">D-beta-D-heptose 7-phosphate kinase</fullName>
            <ecNumber evidence="1">2.7.1.167</ecNumber>
        </recommendedName>
        <alternativeName>
            <fullName evidence="1">D-beta-D-heptose 7-phosphotransferase</fullName>
        </alternativeName>
        <alternativeName>
            <fullName evidence="1">D-glycero-beta-D-manno-heptose-7-phosphate kinase</fullName>
        </alternativeName>
    </domain>
    <domain>
        <recommendedName>
            <fullName evidence="1">D-beta-D-heptose 1-phosphate adenylyltransferase</fullName>
            <ecNumber evidence="1">2.7.7.70</ecNumber>
        </recommendedName>
        <alternativeName>
            <fullName evidence="1">D-glycero-beta-D-manno-heptose 1-phosphate adenylyltransferase</fullName>
        </alternativeName>
    </domain>
</protein>
<sequence length="474" mass="49975">MKLSMPRFDQAPVLVVGDVMLDRYWHGGTSRISPEAPVPVVKVEQIEDRPGGAANVALNIAALGAPASLVGVTGDDEAADSLSNSLKGAGVRALFQRIAHQPTIVKLRVMSRHQQLLRIDFEEPFATDALALGAQVDDLLEGIKVLVLSDYGKGALKNHQALIQAARAKGIPVLADPKGKDFSIYRGASLITPNLSEFEAIVGGCADEHELVTKGATLMHDLDLGALLVTRGEHGMTLLRPDHPALHLPARAREVFDVTGAGDTVISTLAAAIAAGEELPHAVALANLAAGIVVGKLGTAAISAPELRRAIQREEGSERGVLGLEQLLLAVADARAHNEKIVFTNGCFDILHAGHVTYLEQARAQGDRLIVAINDDASVSRLKGPGRPINSVDRRMAVLAGLGAVDWVISFAEGTPENLLREVKPDVLVKGGDYGIDQVVGADIVKAYGGAVKVLGLVENSSTTAIVEKIRKSE</sequence>
<evidence type="ECO:0000255" key="1">
    <source>
        <dbReference type="HAMAP-Rule" id="MF_01603"/>
    </source>
</evidence>
<feature type="chain" id="PRO_0000255774" description="Bifunctional protein HldE">
    <location>
        <begin position="1"/>
        <end position="474"/>
    </location>
</feature>
<feature type="region of interest" description="Ribokinase">
    <location>
        <begin position="1"/>
        <end position="318"/>
    </location>
</feature>
<feature type="region of interest" description="Cytidylyltransferase">
    <location>
        <begin position="343"/>
        <end position="474"/>
    </location>
</feature>
<feature type="active site" evidence="1">
    <location>
        <position position="263"/>
    </location>
</feature>
<feature type="binding site" evidence="1">
    <location>
        <begin position="194"/>
        <end position="197"/>
    </location>
    <ligand>
        <name>ATP</name>
        <dbReference type="ChEBI" id="CHEBI:30616"/>
    </ligand>
</feature>
<comment type="function">
    <text evidence="1">Catalyzes the phosphorylation of D-glycero-D-manno-heptose 7-phosphate at the C-1 position to selectively form D-glycero-beta-D-manno-heptose-1,7-bisphosphate.</text>
</comment>
<comment type="function">
    <text evidence="1">Catalyzes the ADP transfer from ATP to D-glycero-beta-D-manno-heptose 1-phosphate, yielding ADP-D-glycero-beta-D-manno-heptose.</text>
</comment>
<comment type="catalytic activity">
    <reaction evidence="1">
        <text>D-glycero-beta-D-manno-heptose 7-phosphate + ATP = D-glycero-beta-D-manno-heptose 1,7-bisphosphate + ADP + H(+)</text>
        <dbReference type="Rhea" id="RHEA:27473"/>
        <dbReference type="ChEBI" id="CHEBI:15378"/>
        <dbReference type="ChEBI" id="CHEBI:30616"/>
        <dbReference type="ChEBI" id="CHEBI:60204"/>
        <dbReference type="ChEBI" id="CHEBI:60208"/>
        <dbReference type="ChEBI" id="CHEBI:456216"/>
        <dbReference type="EC" id="2.7.1.167"/>
    </reaction>
</comment>
<comment type="catalytic activity">
    <reaction evidence="1">
        <text>D-glycero-beta-D-manno-heptose 1-phosphate + ATP + H(+) = ADP-D-glycero-beta-D-manno-heptose + diphosphate</text>
        <dbReference type="Rhea" id="RHEA:27465"/>
        <dbReference type="ChEBI" id="CHEBI:15378"/>
        <dbReference type="ChEBI" id="CHEBI:30616"/>
        <dbReference type="ChEBI" id="CHEBI:33019"/>
        <dbReference type="ChEBI" id="CHEBI:59967"/>
        <dbReference type="ChEBI" id="CHEBI:61593"/>
        <dbReference type="EC" id="2.7.7.70"/>
    </reaction>
</comment>
<comment type="pathway">
    <text evidence="1">Nucleotide-sugar biosynthesis; ADP-L-glycero-beta-D-manno-heptose biosynthesis; ADP-L-glycero-beta-D-manno-heptose from D-glycero-beta-D-manno-heptose 7-phosphate: step 1/4.</text>
</comment>
<comment type="pathway">
    <text evidence="1">Nucleotide-sugar biosynthesis; ADP-L-glycero-beta-D-manno-heptose biosynthesis; ADP-L-glycero-beta-D-manno-heptose from D-glycero-beta-D-manno-heptose 7-phosphate: step 3/4.</text>
</comment>
<comment type="subunit">
    <text evidence="1">Homodimer.</text>
</comment>
<comment type="similarity">
    <text evidence="1">In the N-terminal section; belongs to the carbohydrate kinase PfkB family.</text>
</comment>
<comment type="similarity">
    <text evidence="1">In the C-terminal section; belongs to the cytidylyltransferase family.</text>
</comment>
<accession>Q3KJ28</accession>